<dbReference type="EC" id="2.7.8.26" evidence="1"/>
<dbReference type="EMBL" id="CP000316">
    <property type="protein sequence ID" value="ABE42696.1"/>
    <property type="molecule type" value="Genomic_DNA"/>
</dbReference>
<dbReference type="RefSeq" id="WP_011481699.1">
    <property type="nucleotide sequence ID" value="NC_007948.1"/>
</dbReference>
<dbReference type="STRING" id="296591.Bpro_0740"/>
<dbReference type="KEGG" id="pol:Bpro_0740"/>
<dbReference type="eggNOG" id="COG0368">
    <property type="taxonomic scope" value="Bacteria"/>
</dbReference>
<dbReference type="HOGENOM" id="CLU_057426_1_1_4"/>
<dbReference type="OrthoDB" id="9794626at2"/>
<dbReference type="UniPathway" id="UPA00148">
    <property type="reaction ID" value="UER00238"/>
</dbReference>
<dbReference type="Proteomes" id="UP000001983">
    <property type="component" value="Chromosome"/>
</dbReference>
<dbReference type="GO" id="GO:0005886">
    <property type="term" value="C:plasma membrane"/>
    <property type="evidence" value="ECO:0007669"/>
    <property type="project" value="UniProtKB-SubCell"/>
</dbReference>
<dbReference type="GO" id="GO:0051073">
    <property type="term" value="F:adenosylcobinamide-GDP ribazoletransferase activity"/>
    <property type="evidence" value="ECO:0007669"/>
    <property type="project" value="UniProtKB-UniRule"/>
</dbReference>
<dbReference type="GO" id="GO:0008818">
    <property type="term" value="F:cobalamin 5'-phosphate synthase activity"/>
    <property type="evidence" value="ECO:0007669"/>
    <property type="project" value="UniProtKB-UniRule"/>
</dbReference>
<dbReference type="GO" id="GO:0009236">
    <property type="term" value="P:cobalamin biosynthetic process"/>
    <property type="evidence" value="ECO:0007669"/>
    <property type="project" value="UniProtKB-UniRule"/>
</dbReference>
<dbReference type="HAMAP" id="MF_00719">
    <property type="entry name" value="CobS"/>
    <property type="match status" value="1"/>
</dbReference>
<dbReference type="InterPro" id="IPR003805">
    <property type="entry name" value="CobS"/>
</dbReference>
<dbReference type="PANTHER" id="PTHR34148">
    <property type="entry name" value="ADENOSYLCOBINAMIDE-GDP RIBAZOLETRANSFERASE"/>
    <property type="match status" value="1"/>
</dbReference>
<dbReference type="PANTHER" id="PTHR34148:SF1">
    <property type="entry name" value="ADENOSYLCOBINAMIDE-GDP RIBAZOLETRANSFERASE"/>
    <property type="match status" value="1"/>
</dbReference>
<dbReference type="Pfam" id="PF02654">
    <property type="entry name" value="CobS"/>
    <property type="match status" value="1"/>
</dbReference>
<sequence length="282" mass="29573">MNPISQFVREYLLAVQFFTRIPVVGRLADWVGYSPELLRASAGHFPGVGILVGVMAALVYGLIQALLPNTPFTPLVAAVLSTAATVLLTGGFHEDGLADVADGLGGSQDRERALEIMKDSRVGAFGAMALMLALLGKTALLAMLGSVDVSPAELGDDASFSSWYIGAALLTGHVVSRGLPLLLIWLLPHVGNTASSKSKPLADQISQGSLLVAFIWSFVVLALAGLALDAISLIVACSFSLLALLWMGALFKRRLQGFTGDCLGATQQVCEIAFYLGLAVSL</sequence>
<organism>
    <name type="scientific">Polaromonas sp. (strain JS666 / ATCC BAA-500)</name>
    <dbReference type="NCBI Taxonomy" id="296591"/>
    <lineage>
        <taxon>Bacteria</taxon>
        <taxon>Pseudomonadati</taxon>
        <taxon>Pseudomonadota</taxon>
        <taxon>Betaproteobacteria</taxon>
        <taxon>Burkholderiales</taxon>
        <taxon>Comamonadaceae</taxon>
        <taxon>Polaromonas</taxon>
    </lineage>
</organism>
<keyword id="KW-0997">Cell inner membrane</keyword>
<keyword id="KW-1003">Cell membrane</keyword>
<keyword id="KW-0169">Cobalamin biosynthesis</keyword>
<keyword id="KW-0460">Magnesium</keyword>
<keyword id="KW-0472">Membrane</keyword>
<keyword id="KW-1185">Reference proteome</keyword>
<keyword id="KW-0808">Transferase</keyword>
<keyword id="KW-0812">Transmembrane</keyword>
<keyword id="KW-1133">Transmembrane helix</keyword>
<feature type="chain" id="PRO_1000045787" description="Adenosylcobinamide-GDP ribazoletransferase">
    <location>
        <begin position="1"/>
        <end position="282"/>
    </location>
</feature>
<feature type="transmembrane region" description="Helical" evidence="1">
    <location>
        <begin position="47"/>
        <end position="67"/>
    </location>
</feature>
<feature type="transmembrane region" description="Helical" evidence="1">
    <location>
        <begin position="72"/>
        <end position="92"/>
    </location>
</feature>
<feature type="transmembrane region" description="Helical" evidence="1">
    <location>
        <begin position="124"/>
        <end position="144"/>
    </location>
</feature>
<feature type="transmembrane region" description="Helical" evidence="1">
    <location>
        <begin position="167"/>
        <end position="187"/>
    </location>
</feature>
<feature type="transmembrane region" description="Helical" evidence="1">
    <location>
        <begin position="208"/>
        <end position="228"/>
    </location>
</feature>
<feature type="transmembrane region" description="Helical" evidence="1">
    <location>
        <begin position="231"/>
        <end position="251"/>
    </location>
</feature>
<proteinExistence type="inferred from homology"/>
<reference key="1">
    <citation type="journal article" date="2008" name="Appl. Environ. Microbiol.">
        <title>The genome of Polaromonas sp. strain JS666: insights into the evolution of a hydrocarbon- and xenobiotic-degrading bacterium, and features of relevance to biotechnology.</title>
        <authorList>
            <person name="Mattes T.E."/>
            <person name="Alexander A.K."/>
            <person name="Richardson P.M."/>
            <person name="Munk A.C."/>
            <person name="Han C.S."/>
            <person name="Stothard P."/>
            <person name="Coleman N.V."/>
        </authorList>
    </citation>
    <scope>NUCLEOTIDE SEQUENCE [LARGE SCALE GENOMIC DNA]</scope>
    <source>
        <strain>JS666 / ATCC BAA-500</strain>
    </source>
</reference>
<evidence type="ECO:0000255" key="1">
    <source>
        <dbReference type="HAMAP-Rule" id="MF_00719"/>
    </source>
</evidence>
<gene>
    <name evidence="1" type="primary">cobS</name>
    <name type="ordered locus">Bpro_0740</name>
</gene>
<accession>Q12FJ6</accession>
<protein>
    <recommendedName>
        <fullName evidence="1">Adenosylcobinamide-GDP ribazoletransferase</fullName>
        <ecNumber evidence="1">2.7.8.26</ecNumber>
    </recommendedName>
    <alternativeName>
        <fullName evidence="1">Cobalamin synthase</fullName>
    </alternativeName>
    <alternativeName>
        <fullName evidence="1">Cobalamin-5'-phosphate synthase</fullName>
    </alternativeName>
</protein>
<comment type="function">
    <text evidence="1">Joins adenosylcobinamide-GDP and alpha-ribazole to generate adenosylcobalamin (Ado-cobalamin). Also synthesizes adenosylcobalamin 5'-phosphate from adenosylcobinamide-GDP and alpha-ribazole 5'-phosphate.</text>
</comment>
<comment type="catalytic activity">
    <reaction evidence="1">
        <text>alpha-ribazole + adenosylcob(III)inamide-GDP = adenosylcob(III)alamin + GMP + H(+)</text>
        <dbReference type="Rhea" id="RHEA:16049"/>
        <dbReference type="ChEBI" id="CHEBI:10329"/>
        <dbReference type="ChEBI" id="CHEBI:15378"/>
        <dbReference type="ChEBI" id="CHEBI:18408"/>
        <dbReference type="ChEBI" id="CHEBI:58115"/>
        <dbReference type="ChEBI" id="CHEBI:60487"/>
        <dbReference type="EC" id="2.7.8.26"/>
    </reaction>
</comment>
<comment type="catalytic activity">
    <reaction evidence="1">
        <text>alpha-ribazole 5'-phosphate + adenosylcob(III)inamide-GDP = adenosylcob(III)alamin 5'-phosphate + GMP + H(+)</text>
        <dbReference type="Rhea" id="RHEA:23560"/>
        <dbReference type="ChEBI" id="CHEBI:15378"/>
        <dbReference type="ChEBI" id="CHEBI:57918"/>
        <dbReference type="ChEBI" id="CHEBI:58115"/>
        <dbReference type="ChEBI" id="CHEBI:60487"/>
        <dbReference type="ChEBI" id="CHEBI:60493"/>
        <dbReference type="EC" id="2.7.8.26"/>
    </reaction>
</comment>
<comment type="cofactor">
    <cofactor evidence="1">
        <name>Mg(2+)</name>
        <dbReference type="ChEBI" id="CHEBI:18420"/>
    </cofactor>
</comment>
<comment type="pathway">
    <text evidence="1">Cofactor biosynthesis; adenosylcobalamin biosynthesis; adenosylcobalamin from cob(II)yrinate a,c-diamide: step 7/7.</text>
</comment>
<comment type="subcellular location">
    <subcellularLocation>
        <location evidence="1">Cell inner membrane</location>
        <topology evidence="1">Multi-pass membrane protein</topology>
    </subcellularLocation>
</comment>
<comment type="similarity">
    <text evidence="1">Belongs to the CobS family.</text>
</comment>
<name>COBS_POLSJ</name>